<organism>
    <name type="scientific">Corynebacterium glutamicum (strain R)</name>
    <dbReference type="NCBI Taxonomy" id="340322"/>
    <lineage>
        <taxon>Bacteria</taxon>
        <taxon>Bacillati</taxon>
        <taxon>Actinomycetota</taxon>
        <taxon>Actinomycetes</taxon>
        <taxon>Mycobacteriales</taxon>
        <taxon>Corynebacteriaceae</taxon>
        <taxon>Corynebacterium</taxon>
    </lineage>
</organism>
<sequence length="236" mass="25046">MSKNSKAYREAAEKIDAGRIYSPLEAANLVKETSSKNYDASIDVAIRLGVDPRKADQLVRGTVSLPNGTGKTVRVAVFAQGEKATEAEAAGADFVGTDELVEKIQGGWTDFDVAIATPDQMAKIGRIARVLGPRGLMPNPKTGTVTNDVAKAIEEVKGGKISFRVDKASNLHAAIGKASFDAKKLAENYGALLDEIIRIKPSSAKGIYVKRVTLSSTTGPGVEVDTHVTKNYAEEA</sequence>
<feature type="chain" id="PRO_0000307997" description="Large ribosomal subunit protein uL1">
    <location>
        <begin position="1"/>
        <end position="236"/>
    </location>
</feature>
<accession>A4QBF1</accession>
<keyword id="KW-0678">Repressor</keyword>
<keyword id="KW-0687">Ribonucleoprotein</keyword>
<keyword id="KW-0689">Ribosomal protein</keyword>
<keyword id="KW-0694">RNA-binding</keyword>
<keyword id="KW-0699">rRNA-binding</keyword>
<keyword id="KW-0810">Translation regulation</keyword>
<keyword id="KW-0820">tRNA-binding</keyword>
<evidence type="ECO:0000255" key="1">
    <source>
        <dbReference type="HAMAP-Rule" id="MF_01318"/>
    </source>
</evidence>
<evidence type="ECO:0000305" key="2"/>
<reference key="1">
    <citation type="journal article" date="2007" name="Microbiology">
        <title>Comparative analysis of the Corynebacterium glutamicum group and complete genome sequence of strain R.</title>
        <authorList>
            <person name="Yukawa H."/>
            <person name="Omumasaba C.A."/>
            <person name="Nonaka H."/>
            <person name="Kos P."/>
            <person name="Okai N."/>
            <person name="Suzuki N."/>
            <person name="Suda M."/>
            <person name="Tsuge Y."/>
            <person name="Watanabe J."/>
            <person name="Ikeda Y."/>
            <person name="Vertes A.A."/>
            <person name="Inui M."/>
        </authorList>
    </citation>
    <scope>NUCLEOTIDE SEQUENCE [LARGE SCALE GENOMIC DNA]</scope>
    <source>
        <strain>R</strain>
    </source>
</reference>
<protein>
    <recommendedName>
        <fullName evidence="1">Large ribosomal subunit protein uL1</fullName>
    </recommendedName>
    <alternativeName>
        <fullName evidence="2">50S ribosomal protein L1</fullName>
    </alternativeName>
</protein>
<proteinExistence type="inferred from homology"/>
<gene>
    <name evidence="1" type="primary">rplA</name>
    <name type="ordered locus">cgR_0580</name>
</gene>
<dbReference type="EMBL" id="AP009044">
    <property type="protein sequence ID" value="BAF53548.1"/>
    <property type="molecule type" value="Genomic_DNA"/>
</dbReference>
<dbReference type="RefSeq" id="WP_011013680.1">
    <property type="nucleotide sequence ID" value="NC_009342.1"/>
</dbReference>
<dbReference type="SMR" id="A4QBF1"/>
<dbReference type="GeneID" id="1021483"/>
<dbReference type="KEGG" id="cgt:cgR_0580"/>
<dbReference type="HOGENOM" id="CLU_062853_0_0_11"/>
<dbReference type="PhylomeDB" id="A4QBF1"/>
<dbReference type="Proteomes" id="UP000006698">
    <property type="component" value="Chromosome"/>
</dbReference>
<dbReference type="GO" id="GO:0015934">
    <property type="term" value="C:large ribosomal subunit"/>
    <property type="evidence" value="ECO:0007669"/>
    <property type="project" value="InterPro"/>
</dbReference>
<dbReference type="GO" id="GO:0019843">
    <property type="term" value="F:rRNA binding"/>
    <property type="evidence" value="ECO:0007669"/>
    <property type="project" value="UniProtKB-UniRule"/>
</dbReference>
<dbReference type="GO" id="GO:0003735">
    <property type="term" value="F:structural constituent of ribosome"/>
    <property type="evidence" value="ECO:0007669"/>
    <property type="project" value="InterPro"/>
</dbReference>
<dbReference type="GO" id="GO:0000049">
    <property type="term" value="F:tRNA binding"/>
    <property type="evidence" value="ECO:0007669"/>
    <property type="project" value="UniProtKB-KW"/>
</dbReference>
<dbReference type="GO" id="GO:0006417">
    <property type="term" value="P:regulation of translation"/>
    <property type="evidence" value="ECO:0007669"/>
    <property type="project" value="UniProtKB-KW"/>
</dbReference>
<dbReference type="GO" id="GO:0006412">
    <property type="term" value="P:translation"/>
    <property type="evidence" value="ECO:0007669"/>
    <property type="project" value="UniProtKB-UniRule"/>
</dbReference>
<dbReference type="CDD" id="cd00403">
    <property type="entry name" value="Ribosomal_L1"/>
    <property type="match status" value="1"/>
</dbReference>
<dbReference type="FunFam" id="3.40.50.790:FF:000001">
    <property type="entry name" value="50S ribosomal protein L1"/>
    <property type="match status" value="1"/>
</dbReference>
<dbReference type="Gene3D" id="3.30.190.20">
    <property type="match status" value="1"/>
</dbReference>
<dbReference type="Gene3D" id="3.40.50.790">
    <property type="match status" value="1"/>
</dbReference>
<dbReference type="HAMAP" id="MF_01318_B">
    <property type="entry name" value="Ribosomal_uL1_B"/>
    <property type="match status" value="1"/>
</dbReference>
<dbReference type="InterPro" id="IPR005878">
    <property type="entry name" value="Ribosom_uL1_bac-type"/>
</dbReference>
<dbReference type="InterPro" id="IPR002143">
    <property type="entry name" value="Ribosomal_uL1"/>
</dbReference>
<dbReference type="InterPro" id="IPR023674">
    <property type="entry name" value="Ribosomal_uL1-like"/>
</dbReference>
<dbReference type="InterPro" id="IPR028364">
    <property type="entry name" value="Ribosomal_uL1/biogenesis"/>
</dbReference>
<dbReference type="InterPro" id="IPR016095">
    <property type="entry name" value="Ribosomal_uL1_3-a/b-sand"/>
</dbReference>
<dbReference type="InterPro" id="IPR023673">
    <property type="entry name" value="Ribosomal_uL1_CS"/>
</dbReference>
<dbReference type="NCBIfam" id="TIGR01169">
    <property type="entry name" value="rplA_bact"/>
    <property type="match status" value="1"/>
</dbReference>
<dbReference type="PANTHER" id="PTHR36427">
    <property type="entry name" value="54S RIBOSOMAL PROTEIN L1, MITOCHONDRIAL"/>
    <property type="match status" value="1"/>
</dbReference>
<dbReference type="PANTHER" id="PTHR36427:SF3">
    <property type="entry name" value="LARGE RIBOSOMAL SUBUNIT PROTEIN UL1M"/>
    <property type="match status" value="1"/>
</dbReference>
<dbReference type="Pfam" id="PF00687">
    <property type="entry name" value="Ribosomal_L1"/>
    <property type="match status" value="1"/>
</dbReference>
<dbReference type="PIRSF" id="PIRSF002155">
    <property type="entry name" value="Ribosomal_L1"/>
    <property type="match status" value="1"/>
</dbReference>
<dbReference type="SUPFAM" id="SSF56808">
    <property type="entry name" value="Ribosomal protein L1"/>
    <property type="match status" value="1"/>
</dbReference>
<dbReference type="PROSITE" id="PS01199">
    <property type="entry name" value="RIBOSOMAL_L1"/>
    <property type="match status" value="1"/>
</dbReference>
<name>RL1_CORGB</name>
<comment type="function">
    <text evidence="1">Binds directly to 23S rRNA. The L1 stalk is quite mobile in the ribosome, and is involved in E site tRNA release.</text>
</comment>
<comment type="function">
    <text evidence="1">Protein L1 is also a translational repressor protein, it controls the translation of the L11 operon by binding to its mRNA.</text>
</comment>
<comment type="subunit">
    <text evidence="1">Part of the 50S ribosomal subunit.</text>
</comment>
<comment type="similarity">
    <text evidence="1">Belongs to the universal ribosomal protein uL1 family.</text>
</comment>